<evidence type="ECO:0000255" key="1">
    <source>
        <dbReference type="HAMAP-Rule" id="MF_01342"/>
    </source>
</evidence>
<evidence type="ECO:0000305" key="2"/>
<comment type="function">
    <text evidence="1">Binds 23S rRNA and is also seen to make contacts with the A and possibly P site tRNAs.</text>
</comment>
<comment type="subunit">
    <text evidence="1">Part of the 50S ribosomal subunit.</text>
</comment>
<comment type="similarity">
    <text evidence="1">Belongs to the universal ribosomal protein uL16 family.</text>
</comment>
<dbReference type="EMBL" id="AM999887">
    <property type="protein sequence ID" value="CAQ55281.1"/>
    <property type="molecule type" value="Genomic_DNA"/>
</dbReference>
<dbReference type="RefSeq" id="WP_012482006.1">
    <property type="nucleotide sequence ID" value="NC_010981.1"/>
</dbReference>
<dbReference type="SMR" id="B3CN33"/>
<dbReference type="KEGG" id="wpi:WP1173"/>
<dbReference type="eggNOG" id="COG0197">
    <property type="taxonomic scope" value="Bacteria"/>
</dbReference>
<dbReference type="HOGENOM" id="CLU_078858_2_1_5"/>
<dbReference type="Proteomes" id="UP000008814">
    <property type="component" value="Chromosome"/>
</dbReference>
<dbReference type="GO" id="GO:0022625">
    <property type="term" value="C:cytosolic large ribosomal subunit"/>
    <property type="evidence" value="ECO:0007669"/>
    <property type="project" value="TreeGrafter"/>
</dbReference>
<dbReference type="GO" id="GO:0019843">
    <property type="term" value="F:rRNA binding"/>
    <property type="evidence" value="ECO:0007669"/>
    <property type="project" value="UniProtKB-UniRule"/>
</dbReference>
<dbReference type="GO" id="GO:0003735">
    <property type="term" value="F:structural constituent of ribosome"/>
    <property type="evidence" value="ECO:0007669"/>
    <property type="project" value="InterPro"/>
</dbReference>
<dbReference type="GO" id="GO:0000049">
    <property type="term" value="F:tRNA binding"/>
    <property type="evidence" value="ECO:0007669"/>
    <property type="project" value="UniProtKB-KW"/>
</dbReference>
<dbReference type="GO" id="GO:0006412">
    <property type="term" value="P:translation"/>
    <property type="evidence" value="ECO:0007669"/>
    <property type="project" value="UniProtKB-UniRule"/>
</dbReference>
<dbReference type="CDD" id="cd01433">
    <property type="entry name" value="Ribosomal_L16_L10e"/>
    <property type="match status" value="1"/>
</dbReference>
<dbReference type="FunFam" id="3.90.1170.10:FF:000001">
    <property type="entry name" value="50S ribosomal protein L16"/>
    <property type="match status" value="1"/>
</dbReference>
<dbReference type="Gene3D" id="3.90.1170.10">
    <property type="entry name" value="Ribosomal protein L10e/L16"/>
    <property type="match status" value="1"/>
</dbReference>
<dbReference type="HAMAP" id="MF_01342">
    <property type="entry name" value="Ribosomal_uL16"/>
    <property type="match status" value="1"/>
</dbReference>
<dbReference type="InterPro" id="IPR047873">
    <property type="entry name" value="Ribosomal_uL16"/>
</dbReference>
<dbReference type="InterPro" id="IPR000114">
    <property type="entry name" value="Ribosomal_uL16_bact-type"/>
</dbReference>
<dbReference type="InterPro" id="IPR020798">
    <property type="entry name" value="Ribosomal_uL16_CS"/>
</dbReference>
<dbReference type="InterPro" id="IPR016180">
    <property type="entry name" value="Ribosomal_uL16_dom"/>
</dbReference>
<dbReference type="InterPro" id="IPR036920">
    <property type="entry name" value="Ribosomal_uL16_sf"/>
</dbReference>
<dbReference type="NCBIfam" id="TIGR01164">
    <property type="entry name" value="rplP_bact"/>
    <property type="match status" value="1"/>
</dbReference>
<dbReference type="PANTHER" id="PTHR12220">
    <property type="entry name" value="50S/60S RIBOSOMAL PROTEIN L16"/>
    <property type="match status" value="1"/>
</dbReference>
<dbReference type="PANTHER" id="PTHR12220:SF13">
    <property type="entry name" value="LARGE RIBOSOMAL SUBUNIT PROTEIN UL16M"/>
    <property type="match status" value="1"/>
</dbReference>
<dbReference type="Pfam" id="PF00252">
    <property type="entry name" value="Ribosomal_L16"/>
    <property type="match status" value="1"/>
</dbReference>
<dbReference type="PRINTS" id="PR00060">
    <property type="entry name" value="RIBOSOMALL16"/>
</dbReference>
<dbReference type="SUPFAM" id="SSF54686">
    <property type="entry name" value="Ribosomal protein L16p/L10e"/>
    <property type="match status" value="1"/>
</dbReference>
<dbReference type="PROSITE" id="PS00586">
    <property type="entry name" value="RIBOSOMAL_L16_1"/>
    <property type="match status" value="1"/>
</dbReference>
<dbReference type="PROSITE" id="PS00701">
    <property type="entry name" value="RIBOSOMAL_L16_2"/>
    <property type="match status" value="1"/>
</dbReference>
<sequence>MFVPKKSKYKKVFKGRIKGNAKGGSTLSFGDYGLKAMEVGKVQSKHIETARRVISRTLKRSGKVWIRIFPDTPVSKKPADVRMGKGKGSIEFWVFKAKPGRVLFEISSDVPMHLARLALEKATAKLPMKCKFISNHN</sequence>
<reference key="1">
    <citation type="journal article" date="2008" name="Mol. Biol. Evol.">
        <title>Genome evolution of Wolbachia strain wPip from the Culex pipiens group.</title>
        <authorList>
            <person name="Klasson L."/>
            <person name="Walker T."/>
            <person name="Sebaihia M."/>
            <person name="Sanders M.J."/>
            <person name="Quail M.A."/>
            <person name="Lord A."/>
            <person name="Sanders S."/>
            <person name="Earl J."/>
            <person name="O'Neill S.L."/>
            <person name="Thomson N."/>
            <person name="Sinkins S.P."/>
            <person name="Parkhill J."/>
        </authorList>
    </citation>
    <scope>NUCLEOTIDE SEQUENCE [LARGE SCALE GENOMIC DNA]</scope>
    <source>
        <strain>wPip</strain>
    </source>
</reference>
<name>RL16_WOLPP</name>
<proteinExistence type="inferred from homology"/>
<keyword id="KW-0687">Ribonucleoprotein</keyword>
<keyword id="KW-0689">Ribosomal protein</keyword>
<keyword id="KW-0694">RNA-binding</keyword>
<keyword id="KW-0699">rRNA-binding</keyword>
<keyword id="KW-0820">tRNA-binding</keyword>
<accession>B3CN33</accession>
<gene>
    <name evidence="1" type="primary">rplP</name>
    <name type="ordered locus">WP1173</name>
</gene>
<protein>
    <recommendedName>
        <fullName evidence="1">Large ribosomal subunit protein uL16</fullName>
    </recommendedName>
    <alternativeName>
        <fullName evidence="2">50S ribosomal protein L16</fullName>
    </alternativeName>
</protein>
<feature type="chain" id="PRO_1000143049" description="Large ribosomal subunit protein uL16">
    <location>
        <begin position="1"/>
        <end position="137"/>
    </location>
</feature>
<organism>
    <name type="scientific">Wolbachia pipientis subsp. Culex pipiens (strain wPip)</name>
    <dbReference type="NCBI Taxonomy" id="570417"/>
    <lineage>
        <taxon>Bacteria</taxon>
        <taxon>Pseudomonadati</taxon>
        <taxon>Pseudomonadota</taxon>
        <taxon>Alphaproteobacteria</taxon>
        <taxon>Rickettsiales</taxon>
        <taxon>Anaplasmataceae</taxon>
        <taxon>Wolbachieae</taxon>
        <taxon>Wolbachia</taxon>
    </lineage>
</organism>